<proteinExistence type="inferred from homology"/>
<gene>
    <name evidence="1" type="primary">nanK</name>
    <name type="ordered locus">YpsIP31758_1295</name>
</gene>
<keyword id="KW-0067">ATP-binding</keyword>
<keyword id="KW-0119">Carbohydrate metabolism</keyword>
<keyword id="KW-0418">Kinase</keyword>
<keyword id="KW-0479">Metal-binding</keyword>
<keyword id="KW-0547">Nucleotide-binding</keyword>
<keyword id="KW-0808">Transferase</keyword>
<keyword id="KW-0862">Zinc</keyword>
<evidence type="ECO:0000255" key="1">
    <source>
        <dbReference type="HAMAP-Rule" id="MF_01234"/>
    </source>
</evidence>
<feature type="chain" id="PRO_1000066912" description="N-acetylmannosamine kinase">
    <location>
        <begin position="1"/>
        <end position="290"/>
    </location>
</feature>
<feature type="binding site" evidence="1">
    <location>
        <begin position="6"/>
        <end position="13"/>
    </location>
    <ligand>
        <name>ATP</name>
        <dbReference type="ChEBI" id="CHEBI:30616"/>
    </ligand>
</feature>
<feature type="binding site" evidence="1">
    <location>
        <begin position="132"/>
        <end position="139"/>
    </location>
    <ligand>
        <name>ATP</name>
        <dbReference type="ChEBI" id="CHEBI:30616"/>
    </ligand>
</feature>
<feature type="binding site" evidence="1">
    <location>
        <position position="156"/>
    </location>
    <ligand>
        <name>Zn(2+)</name>
        <dbReference type="ChEBI" id="CHEBI:29105"/>
    </ligand>
</feature>
<feature type="binding site" evidence="1">
    <location>
        <position position="166"/>
    </location>
    <ligand>
        <name>Zn(2+)</name>
        <dbReference type="ChEBI" id="CHEBI:29105"/>
    </ligand>
</feature>
<feature type="binding site" evidence="1">
    <location>
        <position position="168"/>
    </location>
    <ligand>
        <name>Zn(2+)</name>
        <dbReference type="ChEBI" id="CHEBI:29105"/>
    </ligand>
</feature>
<feature type="binding site" evidence="1">
    <location>
        <position position="173"/>
    </location>
    <ligand>
        <name>Zn(2+)</name>
        <dbReference type="ChEBI" id="CHEBI:29105"/>
    </ligand>
</feature>
<protein>
    <recommendedName>
        <fullName evidence="1">N-acetylmannosamine kinase</fullName>
        <ecNumber evidence="1">2.7.1.60</ecNumber>
    </recommendedName>
    <alternativeName>
        <fullName evidence="1">ManNAc kinase</fullName>
    </alternativeName>
    <alternativeName>
        <fullName evidence="1">N-acetyl-D-mannosamine kinase</fullName>
    </alternativeName>
</protein>
<organism>
    <name type="scientific">Yersinia pseudotuberculosis serotype O:1b (strain IP 31758)</name>
    <dbReference type="NCBI Taxonomy" id="349747"/>
    <lineage>
        <taxon>Bacteria</taxon>
        <taxon>Pseudomonadati</taxon>
        <taxon>Pseudomonadota</taxon>
        <taxon>Gammaproteobacteria</taxon>
        <taxon>Enterobacterales</taxon>
        <taxon>Yersiniaceae</taxon>
        <taxon>Yersinia</taxon>
    </lineage>
</organism>
<reference key="1">
    <citation type="journal article" date="2007" name="PLoS Genet.">
        <title>The complete genome sequence of Yersinia pseudotuberculosis IP31758, the causative agent of Far East scarlet-like fever.</title>
        <authorList>
            <person name="Eppinger M."/>
            <person name="Rosovitz M.J."/>
            <person name="Fricke W.F."/>
            <person name="Rasko D.A."/>
            <person name="Kokorina G."/>
            <person name="Fayolle C."/>
            <person name="Lindler L.E."/>
            <person name="Carniel E."/>
            <person name="Ravel J."/>
        </authorList>
    </citation>
    <scope>NUCLEOTIDE SEQUENCE [LARGE SCALE GENOMIC DNA]</scope>
    <source>
        <strain>IP 31758</strain>
    </source>
</reference>
<name>NANK_YERP3</name>
<comment type="function">
    <text evidence="1">Catalyzes the phosphorylation of N-acetylmannosamine (ManNAc) to ManNAc-6-P.</text>
</comment>
<comment type="catalytic activity">
    <reaction evidence="1">
        <text>an N-acyl-D-mannosamine + ATP = an N-acyl-D-mannosamine 6-phosphate + ADP + H(+)</text>
        <dbReference type="Rhea" id="RHEA:23832"/>
        <dbReference type="ChEBI" id="CHEBI:15378"/>
        <dbReference type="ChEBI" id="CHEBI:16062"/>
        <dbReference type="ChEBI" id="CHEBI:30616"/>
        <dbReference type="ChEBI" id="CHEBI:57666"/>
        <dbReference type="ChEBI" id="CHEBI:456216"/>
        <dbReference type="EC" id="2.7.1.60"/>
    </reaction>
</comment>
<comment type="pathway">
    <text evidence="1">Amino-sugar metabolism; N-acetylneuraminate degradation; D-fructose 6-phosphate from N-acetylneuraminate: step 2/5.</text>
</comment>
<comment type="subunit">
    <text evidence="1">Homodimer.</text>
</comment>
<comment type="similarity">
    <text evidence="1">Belongs to the ROK (NagC/XylR) family. NanK subfamily.</text>
</comment>
<accession>A7FG96</accession>
<sequence length="290" mass="29745">MGKGLALDIGGTKIAAAVVTESGMLIGRQQIATPRGGAGQLAAALETLIAPYRHQVDFIAVASTGIISGGRLTALNPANLGGLADFPLYDCIRSISDLPCVLLNDGQAAAWAEYQALGDKNDNMMFVTVSTGVGGGIILNKKLLVGQRGLAGHIGHTLSDPHGVLCGCGRRGCVESVASGTAIGAETLGWKQPVSAATVFDMAQQGDAQAGKVINRSAAAIAQMLADMKMALDLEVVILGGSVGLAVGYLERVVAAQKTLPGIYRVPVQEAHHRQDSGLLGAALWARTSL</sequence>
<dbReference type="EC" id="2.7.1.60" evidence="1"/>
<dbReference type="EMBL" id="CP000720">
    <property type="protein sequence ID" value="ABS48630.1"/>
    <property type="molecule type" value="Genomic_DNA"/>
</dbReference>
<dbReference type="RefSeq" id="WP_002208516.1">
    <property type="nucleotide sequence ID" value="NC_009708.1"/>
</dbReference>
<dbReference type="SMR" id="A7FG96"/>
<dbReference type="KEGG" id="ypi:YpsIP31758_1295"/>
<dbReference type="HOGENOM" id="CLU_036604_0_4_6"/>
<dbReference type="UniPathway" id="UPA00629">
    <property type="reaction ID" value="UER00681"/>
</dbReference>
<dbReference type="Proteomes" id="UP000002412">
    <property type="component" value="Chromosome"/>
</dbReference>
<dbReference type="GO" id="GO:0005524">
    <property type="term" value="F:ATP binding"/>
    <property type="evidence" value="ECO:0007669"/>
    <property type="project" value="UniProtKB-UniRule"/>
</dbReference>
<dbReference type="GO" id="GO:0009384">
    <property type="term" value="F:N-acylmannosamine kinase activity"/>
    <property type="evidence" value="ECO:0007669"/>
    <property type="project" value="UniProtKB-UniRule"/>
</dbReference>
<dbReference type="GO" id="GO:0008270">
    <property type="term" value="F:zinc ion binding"/>
    <property type="evidence" value="ECO:0007669"/>
    <property type="project" value="UniProtKB-UniRule"/>
</dbReference>
<dbReference type="GO" id="GO:0019262">
    <property type="term" value="P:N-acetylneuraminate catabolic process"/>
    <property type="evidence" value="ECO:0007669"/>
    <property type="project" value="UniProtKB-UniRule"/>
</dbReference>
<dbReference type="CDD" id="cd24069">
    <property type="entry name" value="ASKHA_NBD_ROK_EcNanK-like"/>
    <property type="match status" value="1"/>
</dbReference>
<dbReference type="FunFam" id="3.30.420.40:FF:000063">
    <property type="entry name" value="N-acetylmannosamine kinase"/>
    <property type="match status" value="1"/>
</dbReference>
<dbReference type="Gene3D" id="3.30.420.40">
    <property type="match status" value="2"/>
</dbReference>
<dbReference type="HAMAP" id="MF_01234">
    <property type="entry name" value="ManNAc_kinase"/>
    <property type="match status" value="1"/>
</dbReference>
<dbReference type="InterPro" id="IPR043129">
    <property type="entry name" value="ATPase_NBD"/>
</dbReference>
<dbReference type="InterPro" id="IPR023945">
    <property type="entry name" value="ManNAc_kinase_bac"/>
</dbReference>
<dbReference type="InterPro" id="IPR000600">
    <property type="entry name" value="ROK"/>
</dbReference>
<dbReference type="InterPro" id="IPR049874">
    <property type="entry name" value="ROK_cs"/>
</dbReference>
<dbReference type="NCBIfam" id="NF003461">
    <property type="entry name" value="PRK05082.1"/>
    <property type="match status" value="1"/>
</dbReference>
<dbReference type="PANTHER" id="PTHR18964:SF169">
    <property type="entry name" value="N-ACETYLMANNOSAMINE KINASE"/>
    <property type="match status" value="1"/>
</dbReference>
<dbReference type="PANTHER" id="PTHR18964">
    <property type="entry name" value="ROK (REPRESSOR, ORF, KINASE) FAMILY"/>
    <property type="match status" value="1"/>
</dbReference>
<dbReference type="Pfam" id="PF00480">
    <property type="entry name" value="ROK"/>
    <property type="match status" value="1"/>
</dbReference>
<dbReference type="SUPFAM" id="SSF53067">
    <property type="entry name" value="Actin-like ATPase domain"/>
    <property type="match status" value="1"/>
</dbReference>
<dbReference type="PROSITE" id="PS01125">
    <property type="entry name" value="ROK"/>
    <property type="match status" value="1"/>
</dbReference>